<protein>
    <recommendedName>
        <fullName evidence="1">Glutamyl-tRNA reductase</fullName>
        <shortName evidence="1">GluTR</shortName>
        <ecNumber evidence="1">1.2.1.70</ecNumber>
    </recommendedName>
</protein>
<comment type="function">
    <text evidence="1">Catalyzes the NADPH-dependent reduction of glutamyl-tRNA(Glu) to glutamate 1-semialdehyde (GSA).</text>
</comment>
<comment type="catalytic activity">
    <reaction evidence="1">
        <text>(S)-4-amino-5-oxopentanoate + tRNA(Glu) + NADP(+) = L-glutamyl-tRNA(Glu) + NADPH + H(+)</text>
        <dbReference type="Rhea" id="RHEA:12344"/>
        <dbReference type="Rhea" id="RHEA-COMP:9663"/>
        <dbReference type="Rhea" id="RHEA-COMP:9680"/>
        <dbReference type="ChEBI" id="CHEBI:15378"/>
        <dbReference type="ChEBI" id="CHEBI:57501"/>
        <dbReference type="ChEBI" id="CHEBI:57783"/>
        <dbReference type="ChEBI" id="CHEBI:58349"/>
        <dbReference type="ChEBI" id="CHEBI:78442"/>
        <dbReference type="ChEBI" id="CHEBI:78520"/>
        <dbReference type="EC" id="1.2.1.70"/>
    </reaction>
</comment>
<comment type="pathway">
    <text evidence="1">Porphyrin-containing compound metabolism; protoporphyrin-IX biosynthesis; 5-aminolevulinate from L-glutamyl-tRNA(Glu): step 1/2.</text>
</comment>
<comment type="subunit">
    <text evidence="1">Homodimer.</text>
</comment>
<comment type="domain">
    <text evidence="1">Possesses an unusual extended V-shaped dimeric structure with each monomer consisting of three distinct domains arranged along a curved 'spinal' alpha-helix. The N-terminal catalytic domain specifically recognizes the glutamate moiety of the substrate. The second domain is the NADPH-binding domain, and the third C-terminal domain is responsible for dimerization.</text>
</comment>
<comment type="miscellaneous">
    <text evidence="1">During catalysis, the active site Cys acts as a nucleophile attacking the alpha-carbonyl group of tRNA-bound glutamate with the formation of a thioester intermediate between enzyme and glutamate, and the concomitant release of tRNA(Glu). The thioester intermediate is finally reduced by direct hydride transfer from NADPH, to form the product GSA.</text>
</comment>
<comment type="similarity">
    <text evidence="1">Belongs to the glutamyl-tRNA reductase family.</text>
</comment>
<name>HEM1_RUTMC</name>
<feature type="chain" id="PRO_0000335069" description="Glutamyl-tRNA reductase">
    <location>
        <begin position="1"/>
        <end position="416"/>
    </location>
</feature>
<feature type="active site" description="Nucleophile" evidence="1">
    <location>
        <position position="51"/>
    </location>
</feature>
<feature type="binding site" evidence="1">
    <location>
        <begin position="50"/>
        <end position="53"/>
    </location>
    <ligand>
        <name>substrate</name>
    </ligand>
</feature>
<feature type="binding site" evidence="1">
    <location>
        <position position="109"/>
    </location>
    <ligand>
        <name>substrate</name>
    </ligand>
</feature>
<feature type="binding site" evidence="1">
    <location>
        <begin position="114"/>
        <end position="116"/>
    </location>
    <ligand>
        <name>substrate</name>
    </ligand>
</feature>
<feature type="binding site" evidence="1">
    <location>
        <position position="120"/>
    </location>
    <ligand>
        <name>substrate</name>
    </ligand>
</feature>
<feature type="binding site" evidence="1">
    <location>
        <begin position="189"/>
        <end position="194"/>
    </location>
    <ligand>
        <name>NADP(+)</name>
        <dbReference type="ChEBI" id="CHEBI:58349"/>
    </ligand>
</feature>
<feature type="site" description="Important for activity" evidence="1">
    <location>
        <position position="99"/>
    </location>
</feature>
<organism>
    <name type="scientific">Ruthia magnifica subsp. Calyptogena magnifica</name>
    <dbReference type="NCBI Taxonomy" id="413404"/>
    <lineage>
        <taxon>Bacteria</taxon>
        <taxon>Pseudomonadati</taxon>
        <taxon>Pseudomonadota</taxon>
        <taxon>Gammaproteobacteria</taxon>
        <taxon>Candidatus Pseudothioglobaceae</taxon>
        <taxon>Candidatus Ruthturnera</taxon>
    </lineage>
</organism>
<reference key="1">
    <citation type="journal article" date="2007" name="Science">
        <title>The Calyptogena magnifica chemoautotrophic symbiont genome.</title>
        <authorList>
            <person name="Newton I.L.G."/>
            <person name="Woyke T."/>
            <person name="Auchtung T.A."/>
            <person name="Dilly G.F."/>
            <person name="Dutton R.J."/>
            <person name="Fisher M.C."/>
            <person name="Fontanez K.M."/>
            <person name="Lau E."/>
            <person name="Stewart F.J."/>
            <person name="Richardson P.M."/>
            <person name="Barry K.W."/>
            <person name="Saunders E."/>
            <person name="Detter J.C."/>
            <person name="Wu D."/>
            <person name="Eisen J.A."/>
            <person name="Cavanaugh C.M."/>
        </authorList>
    </citation>
    <scope>NUCLEOTIDE SEQUENCE [LARGE SCALE GENOMIC DNA]</scope>
</reference>
<dbReference type="EC" id="1.2.1.70" evidence="1"/>
<dbReference type="EMBL" id="CP000488">
    <property type="protein sequence ID" value="ABL02458.1"/>
    <property type="molecule type" value="Genomic_DNA"/>
</dbReference>
<dbReference type="RefSeq" id="WP_011738083.1">
    <property type="nucleotide sequence ID" value="NC_008610.1"/>
</dbReference>
<dbReference type="SMR" id="A1AX01"/>
<dbReference type="STRING" id="413404.Rmag_0730"/>
<dbReference type="KEGG" id="rma:Rmag_0730"/>
<dbReference type="eggNOG" id="COG0373">
    <property type="taxonomic scope" value="Bacteria"/>
</dbReference>
<dbReference type="HOGENOM" id="CLU_035113_2_2_6"/>
<dbReference type="OrthoDB" id="110209at2"/>
<dbReference type="UniPathway" id="UPA00251">
    <property type="reaction ID" value="UER00316"/>
</dbReference>
<dbReference type="Proteomes" id="UP000002587">
    <property type="component" value="Chromosome"/>
</dbReference>
<dbReference type="GO" id="GO:0008883">
    <property type="term" value="F:glutamyl-tRNA reductase activity"/>
    <property type="evidence" value="ECO:0007669"/>
    <property type="project" value="UniProtKB-UniRule"/>
</dbReference>
<dbReference type="GO" id="GO:0050661">
    <property type="term" value="F:NADP binding"/>
    <property type="evidence" value="ECO:0007669"/>
    <property type="project" value="InterPro"/>
</dbReference>
<dbReference type="GO" id="GO:0019353">
    <property type="term" value="P:protoporphyrinogen IX biosynthetic process from glutamate"/>
    <property type="evidence" value="ECO:0007669"/>
    <property type="project" value="TreeGrafter"/>
</dbReference>
<dbReference type="CDD" id="cd05213">
    <property type="entry name" value="NAD_bind_Glutamyl_tRNA_reduct"/>
    <property type="match status" value="1"/>
</dbReference>
<dbReference type="FunFam" id="3.30.460.30:FF:000001">
    <property type="entry name" value="Glutamyl-tRNA reductase"/>
    <property type="match status" value="1"/>
</dbReference>
<dbReference type="FunFam" id="3.40.50.720:FF:000031">
    <property type="entry name" value="Glutamyl-tRNA reductase"/>
    <property type="match status" value="1"/>
</dbReference>
<dbReference type="Gene3D" id="3.30.460.30">
    <property type="entry name" value="Glutamyl-tRNA reductase, N-terminal domain"/>
    <property type="match status" value="1"/>
</dbReference>
<dbReference type="Gene3D" id="3.40.50.720">
    <property type="entry name" value="NAD(P)-binding Rossmann-like Domain"/>
    <property type="match status" value="1"/>
</dbReference>
<dbReference type="HAMAP" id="MF_00087">
    <property type="entry name" value="Glu_tRNA_reductase"/>
    <property type="match status" value="1"/>
</dbReference>
<dbReference type="InterPro" id="IPR000343">
    <property type="entry name" value="4pyrrol_synth_GluRdtase"/>
</dbReference>
<dbReference type="InterPro" id="IPR015896">
    <property type="entry name" value="4pyrrol_synth_GluRdtase_dimer"/>
</dbReference>
<dbReference type="InterPro" id="IPR015895">
    <property type="entry name" value="4pyrrol_synth_GluRdtase_N"/>
</dbReference>
<dbReference type="InterPro" id="IPR018214">
    <property type="entry name" value="GluRdtase_CS"/>
</dbReference>
<dbReference type="InterPro" id="IPR036453">
    <property type="entry name" value="GluRdtase_dimer_dom_sf"/>
</dbReference>
<dbReference type="InterPro" id="IPR036343">
    <property type="entry name" value="GluRdtase_N_sf"/>
</dbReference>
<dbReference type="InterPro" id="IPR036291">
    <property type="entry name" value="NAD(P)-bd_dom_sf"/>
</dbReference>
<dbReference type="InterPro" id="IPR006151">
    <property type="entry name" value="Shikm_DH/Glu-tRNA_Rdtase"/>
</dbReference>
<dbReference type="NCBIfam" id="TIGR01035">
    <property type="entry name" value="hemA"/>
    <property type="match status" value="1"/>
</dbReference>
<dbReference type="PANTHER" id="PTHR43013">
    <property type="entry name" value="GLUTAMYL-TRNA REDUCTASE"/>
    <property type="match status" value="1"/>
</dbReference>
<dbReference type="PANTHER" id="PTHR43013:SF1">
    <property type="entry name" value="GLUTAMYL-TRNA REDUCTASE"/>
    <property type="match status" value="1"/>
</dbReference>
<dbReference type="Pfam" id="PF00745">
    <property type="entry name" value="GlutR_dimer"/>
    <property type="match status" value="1"/>
</dbReference>
<dbReference type="Pfam" id="PF05201">
    <property type="entry name" value="GlutR_N"/>
    <property type="match status" value="1"/>
</dbReference>
<dbReference type="Pfam" id="PF01488">
    <property type="entry name" value="Shikimate_DH"/>
    <property type="match status" value="1"/>
</dbReference>
<dbReference type="PIRSF" id="PIRSF000445">
    <property type="entry name" value="4pyrrol_synth_GluRdtase"/>
    <property type="match status" value="1"/>
</dbReference>
<dbReference type="SUPFAM" id="SSF69742">
    <property type="entry name" value="Glutamyl tRNA-reductase catalytic, N-terminal domain"/>
    <property type="match status" value="1"/>
</dbReference>
<dbReference type="SUPFAM" id="SSF69075">
    <property type="entry name" value="Glutamyl tRNA-reductase dimerization domain"/>
    <property type="match status" value="1"/>
</dbReference>
<dbReference type="SUPFAM" id="SSF51735">
    <property type="entry name" value="NAD(P)-binding Rossmann-fold domains"/>
    <property type="match status" value="1"/>
</dbReference>
<dbReference type="PROSITE" id="PS00747">
    <property type="entry name" value="GLUTR"/>
    <property type="match status" value="1"/>
</dbReference>
<gene>
    <name evidence="1" type="primary">hemA</name>
    <name type="ordered locus">Rmag_0730</name>
</gene>
<accession>A1AX01</accession>
<evidence type="ECO:0000255" key="1">
    <source>
        <dbReference type="HAMAP-Rule" id="MF_00087"/>
    </source>
</evidence>
<keyword id="KW-0521">NADP</keyword>
<keyword id="KW-0560">Oxidoreductase</keyword>
<keyword id="KW-0627">Porphyrin biosynthesis</keyword>
<proteinExistence type="inferred from homology"/>
<sequence length="416" mass="46617">MSQIAILSVNHQLVPVEVREKVAFTPDKLIQALNNLHHIDGIDACIILSTCNRVEIYVASNHKNSEELLSNYLAKTHNIKRDIIDSYLNYFEGNEALTHLCNVATGLDSLVLGEPQILGQLKNAYHIAKEVKTLNKLLEKLFQHTFSTAKKVRTNTQIGASPVSIAYCAVKLSEKIFEQLSEQTVLLIGAGEMIELCAHYLNQKGVNKMIVANRTIENAKKIAHLYQAQSIGLKQFSSFVYKADIIISSTAASMPIIGKGLIESALKKRKHKPIFMLDIAIPRDIEPEVGQLDDVYLYTIDDLGQVVNDNIGNREKEKGLAQEIIVKQNQVFNKWLDTIPNEQMVQSYQFGANSIKNELLEKAIKQLKNGANSEDTIRKLADQLANKLLHLPFKNIKQTSIENLSQCEGCIPYIKN</sequence>